<organism>
    <name type="scientific">Polynucleobacter asymbioticus (strain DSM 18221 / CIP 109841 / QLW-P1DMWA-1)</name>
    <name type="common">Polynucleobacter necessarius subsp. asymbioticus</name>
    <dbReference type="NCBI Taxonomy" id="312153"/>
    <lineage>
        <taxon>Bacteria</taxon>
        <taxon>Pseudomonadati</taxon>
        <taxon>Pseudomonadota</taxon>
        <taxon>Betaproteobacteria</taxon>
        <taxon>Burkholderiales</taxon>
        <taxon>Burkholderiaceae</taxon>
        <taxon>Polynucleobacter</taxon>
    </lineage>
</organism>
<protein>
    <recommendedName>
        <fullName evidence="1">Large ribosomal subunit protein uL23</fullName>
    </recommendedName>
    <alternativeName>
        <fullName evidence="2">50S ribosomal protein L23</fullName>
    </alternativeName>
</protein>
<keyword id="KW-1185">Reference proteome</keyword>
<keyword id="KW-0687">Ribonucleoprotein</keyword>
<keyword id="KW-0689">Ribosomal protein</keyword>
<keyword id="KW-0694">RNA-binding</keyword>
<keyword id="KW-0699">rRNA-binding</keyword>
<reference key="1">
    <citation type="journal article" date="2012" name="Stand. Genomic Sci.">
        <title>Complete genome sequence of Polynucleobacter necessarius subsp. asymbioticus type strain (QLW-P1DMWA-1(T)).</title>
        <authorList>
            <person name="Meincke L."/>
            <person name="Copeland A."/>
            <person name="Lapidus A."/>
            <person name="Lucas S."/>
            <person name="Berry K.W."/>
            <person name="Del Rio T.G."/>
            <person name="Hammon N."/>
            <person name="Dalin E."/>
            <person name="Tice H."/>
            <person name="Pitluck S."/>
            <person name="Richardson P."/>
            <person name="Bruce D."/>
            <person name="Goodwin L."/>
            <person name="Han C."/>
            <person name="Tapia R."/>
            <person name="Detter J.C."/>
            <person name="Schmutz J."/>
            <person name="Brettin T."/>
            <person name="Larimer F."/>
            <person name="Land M."/>
            <person name="Hauser L."/>
            <person name="Kyrpides N.C."/>
            <person name="Ivanova N."/>
            <person name="Goker M."/>
            <person name="Woyke T."/>
            <person name="Wu Q.L."/>
            <person name="Pockl M."/>
            <person name="Hahn M.W."/>
            <person name="Klenk H.P."/>
        </authorList>
    </citation>
    <scope>NUCLEOTIDE SEQUENCE [LARGE SCALE GENOMIC DNA]</scope>
    <source>
        <strain>DSM 18221 / CIP 109841 / QLW-P1DMWA-1</strain>
    </source>
</reference>
<comment type="function">
    <text evidence="1">One of the early assembly proteins it binds 23S rRNA. One of the proteins that surrounds the polypeptide exit tunnel on the outside of the ribosome. Forms the main docking site for trigger factor binding to the ribosome.</text>
</comment>
<comment type="subunit">
    <text evidence="1">Part of the 50S ribosomal subunit. Contacts protein L29, and trigger factor when it is bound to the ribosome.</text>
</comment>
<comment type="similarity">
    <text evidence="1">Belongs to the universal ribosomal protein uL23 family.</text>
</comment>
<dbReference type="EMBL" id="CP000655">
    <property type="protein sequence ID" value="ABP33277.1"/>
    <property type="molecule type" value="Genomic_DNA"/>
</dbReference>
<dbReference type="RefSeq" id="WP_011901902.1">
    <property type="nucleotide sequence ID" value="NC_009379.1"/>
</dbReference>
<dbReference type="SMR" id="A4SUW3"/>
<dbReference type="GeneID" id="31480401"/>
<dbReference type="KEGG" id="pnu:Pnuc_0055"/>
<dbReference type="eggNOG" id="COG0089">
    <property type="taxonomic scope" value="Bacteria"/>
</dbReference>
<dbReference type="HOGENOM" id="CLU_037562_3_1_4"/>
<dbReference type="Proteomes" id="UP000000231">
    <property type="component" value="Chromosome"/>
</dbReference>
<dbReference type="GO" id="GO:1990904">
    <property type="term" value="C:ribonucleoprotein complex"/>
    <property type="evidence" value="ECO:0007669"/>
    <property type="project" value="UniProtKB-KW"/>
</dbReference>
<dbReference type="GO" id="GO:0005840">
    <property type="term" value="C:ribosome"/>
    <property type="evidence" value="ECO:0007669"/>
    <property type="project" value="UniProtKB-KW"/>
</dbReference>
<dbReference type="GO" id="GO:0019843">
    <property type="term" value="F:rRNA binding"/>
    <property type="evidence" value="ECO:0007669"/>
    <property type="project" value="UniProtKB-UniRule"/>
</dbReference>
<dbReference type="GO" id="GO:0003735">
    <property type="term" value="F:structural constituent of ribosome"/>
    <property type="evidence" value="ECO:0007669"/>
    <property type="project" value="InterPro"/>
</dbReference>
<dbReference type="GO" id="GO:0006412">
    <property type="term" value="P:translation"/>
    <property type="evidence" value="ECO:0007669"/>
    <property type="project" value="UniProtKB-UniRule"/>
</dbReference>
<dbReference type="FunFam" id="3.30.70.330:FF:000001">
    <property type="entry name" value="50S ribosomal protein L23"/>
    <property type="match status" value="1"/>
</dbReference>
<dbReference type="Gene3D" id="3.30.70.330">
    <property type="match status" value="1"/>
</dbReference>
<dbReference type="HAMAP" id="MF_01369_B">
    <property type="entry name" value="Ribosomal_uL23_B"/>
    <property type="match status" value="1"/>
</dbReference>
<dbReference type="InterPro" id="IPR012677">
    <property type="entry name" value="Nucleotide-bd_a/b_plait_sf"/>
</dbReference>
<dbReference type="InterPro" id="IPR013025">
    <property type="entry name" value="Ribosomal_uL23-like"/>
</dbReference>
<dbReference type="InterPro" id="IPR012678">
    <property type="entry name" value="Ribosomal_uL23/eL15/eS24_sf"/>
</dbReference>
<dbReference type="NCBIfam" id="NF004359">
    <property type="entry name" value="PRK05738.1-3"/>
    <property type="match status" value="1"/>
</dbReference>
<dbReference type="NCBIfam" id="NF004363">
    <property type="entry name" value="PRK05738.2-4"/>
    <property type="match status" value="1"/>
</dbReference>
<dbReference type="PANTHER" id="PTHR11620">
    <property type="entry name" value="60S RIBOSOMAL PROTEIN L23A"/>
    <property type="match status" value="1"/>
</dbReference>
<dbReference type="Pfam" id="PF00276">
    <property type="entry name" value="Ribosomal_L23"/>
    <property type="match status" value="1"/>
</dbReference>
<dbReference type="SUPFAM" id="SSF54189">
    <property type="entry name" value="Ribosomal proteins S24e, L23 and L15e"/>
    <property type="match status" value="1"/>
</dbReference>
<name>RL23_POLAQ</name>
<sequence>MSQVRKNDHSLMKVLLGPVISEKATMVAEKNEQVVFQVARDANKSDVKQAVELLFKVQVDSVQIVNQKGKPKRYGRFEGRRDHTKKAYVNLKPGQEINFEAEAN</sequence>
<feature type="chain" id="PRO_1000087224" description="Large ribosomal subunit protein uL23">
    <location>
        <begin position="1"/>
        <end position="104"/>
    </location>
</feature>
<gene>
    <name evidence="1" type="primary">rplW</name>
    <name type="ordered locus">Pnuc_0055</name>
</gene>
<evidence type="ECO:0000255" key="1">
    <source>
        <dbReference type="HAMAP-Rule" id="MF_01369"/>
    </source>
</evidence>
<evidence type="ECO:0000305" key="2"/>
<accession>A4SUW3</accession>
<proteinExistence type="inferred from homology"/>